<reference key="1">
    <citation type="submission" date="2007-12" db="EMBL/GenBank/DDBJ databases">
        <title>Brucella suis ATCC 23445 whole genome shotgun sequencing project.</title>
        <authorList>
            <person name="Setubal J.C."/>
            <person name="Bowns C."/>
            <person name="Boyle S."/>
            <person name="Crasta O.R."/>
            <person name="Czar M.J."/>
            <person name="Dharmanolla C."/>
            <person name="Gillespie J.J."/>
            <person name="Kenyon R.W."/>
            <person name="Lu J."/>
            <person name="Mane S."/>
            <person name="Mohapatra S."/>
            <person name="Nagrani S."/>
            <person name="Purkayastha A."/>
            <person name="Rajasimha H.K."/>
            <person name="Shallom J.M."/>
            <person name="Shallom S."/>
            <person name="Shukla M."/>
            <person name="Snyder E.E."/>
            <person name="Sobral B.W."/>
            <person name="Wattam A.R."/>
            <person name="Will R."/>
            <person name="Williams K."/>
            <person name="Yoo H."/>
            <person name="Bruce D."/>
            <person name="Detter C."/>
            <person name="Munk C."/>
            <person name="Brettin T.S."/>
        </authorList>
    </citation>
    <scope>NUCLEOTIDE SEQUENCE [LARGE SCALE GENOMIC DNA]</scope>
    <source>
        <strain>ATCC 23445 / NCTC 10510</strain>
    </source>
</reference>
<feature type="chain" id="PRO_0000358362" description="NADH-quinone oxidoreductase subunit B">
    <location>
        <begin position="1"/>
        <end position="193"/>
    </location>
</feature>
<feature type="region of interest" description="Disordered" evidence="3">
    <location>
        <begin position="1"/>
        <end position="23"/>
    </location>
</feature>
<feature type="compositionally biased region" description="Polar residues" evidence="3">
    <location>
        <begin position="1"/>
        <end position="11"/>
    </location>
</feature>
<feature type="binding site" evidence="2">
    <location>
        <position position="72"/>
    </location>
    <ligand>
        <name>[4Fe-4S] cluster</name>
        <dbReference type="ChEBI" id="CHEBI:49883"/>
    </ligand>
</feature>
<feature type="binding site" evidence="2">
    <location>
        <position position="73"/>
    </location>
    <ligand>
        <name>[4Fe-4S] cluster</name>
        <dbReference type="ChEBI" id="CHEBI:49883"/>
    </ligand>
</feature>
<feature type="binding site" evidence="2">
    <location>
        <position position="137"/>
    </location>
    <ligand>
        <name>[4Fe-4S] cluster</name>
        <dbReference type="ChEBI" id="CHEBI:49883"/>
    </ligand>
</feature>
<feature type="binding site" evidence="2">
    <location>
        <position position="167"/>
    </location>
    <ligand>
        <name>[4Fe-4S] cluster</name>
        <dbReference type="ChEBI" id="CHEBI:49883"/>
    </ligand>
</feature>
<gene>
    <name evidence="2" type="primary">nuoB</name>
    <name type="ordered locus">BSUIS_A0842</name>
</gene>
<dbReference type="EC" id="7.1.1.-" evidence="2"/>
<dbReference type="EMBL" id="CP000911">
    <property type="protein sequence ID" value="ABY37910.1"/>
    <property type="molecule type" value="Genomic_DNA"/>
</dbReference>
<dbReference type="RefSeq" id="WP_002967573.1">
    <property type="nucleotide sequence ID" value="NC_010169.1"/>
</dbReference>
<dbReference type="SMR" id="B0CLD0"/>
<dbReference type="KEGG" id="bmt:BSUIS_A0842"/>
<dbReference type="HOGENOM" id="CLU_055737_7_3_5"/>
<dbReference type="Proteomes" id="UP000008545">
    <property type="component" value="Chromosome I"/>
</dbReference>
<dbReference type="GO" id="GO:0005886">
    <property type="term" value="C:plasma membrane"/>
    <property type="evidence" value="ECO:0007669"/>
    <property type="project" value="UniProtKB-SubCell"/>
</dbReference>
<dbReference type="GO" id="GO:0045271">
    <property type="term" value="C:respiratory chain complex I"/>
    <property type="evidence" value="ECO:0007669"/>
    <property type="project" value="TreeGrafter"/>
</dbReference>
<dbReference type="GO" id="GO:0051539">
    <property type="term" value="F:4 iron, 4 sulfur cluster binding"/>
    <property type="evidence" value="ECO:0007669"/>
    <property type="project" value="UniProtKB-KW"/>
</dbReference>
<dbReference type="GO" id="GO:0005506">
    <property type="term" value="F:iron ion binding"/>
    <property type="evidence" value="ECO:0007669"/>
    <property type="project" value="UniProtKB-UniRule"/>
</dbReference>
<dbReference type="GO" id="GO:0008137">
    <property type="term" value="F:NADH dehydrogenase (ubiquinone) activity"/>
    <property type="evidence" value="ECO:0007669"/>
    <property type="project" value="InterPro"/>
</dbReference>
<dbReference type="GO" id="GO:0050136">
    <property type="term" value="F:NADH:ubiquinone reductase (non-electrogenic) activity"/>
    <property type="evidence" value="ECO:0007669"/>
    <property type="project" value="UniProtKB-UniRule"/>
</dbReference>
<dbReference type="GO" id="GO:0048038">
    <property type="term" value="F:quinone binding"/>
    <property type="evidence" value="ECO:0007669"/>
    <property type="project" value="UniProtKB-KW"/>
</dbReference>
<dbReference type="GO" id="GO:0009060">
    <property type="term" value="P:aerobic respiration"/>
    <property type="evidence" value="ECO:0007669"/>
    <property type="project" value="TreeGrafter"/>
</dbReference>
<dbReference type="GO" id="GO:0015990">
    <property type="term" value="P:electron transport coupled proton transport"/>
    <property type="evidence" value="ECO:0007669"/>
    <property type="project" value="TreeGrafter"/>
</dbReference>
<dbReference type="FunFam" id="3.40.50.12280:FF:000001">
    <property type="entry name" value="NADH-quinone oxidoreductase subunit B 2"/>
    <property type="match status" value="1"/>
</dbReference>
<dbReference type="Gene3D" id="3.40.50.12280">
    <property type="match status" value="1"/>
</dbReference>
<dbReference type="HAMAP" id="MF_01356">
    <property type="entry name" value="NDH1_NuoB"/>
    <property type="match status" value="1"/>
</dbReference>
<dbReference type="InterPro" id="IPR006137">
    <property type="entry name" value="NADH_UbQ_OxRdtase-like_20kDa"/>
</dbReference>
<dbReference type="InterPro" id="IPR006138">
    <property type="entry name" value="NADH_UQ_OxRdtase_20Kd_su"/>
</dbReference>
<dbReference type="NCBIfam" id="TIGR01957">
    <property type="entry name" value="nuoB_fam"/>
    <property type="match status" value="1"/>
</dbReference>
<dbReference type="NCBIfam" id="NF005012">
    <property type="entry name" value="PRK06411.1"/>
    <property type="match status" value="1"/>
</dbReference>
<dbReference type="PANTHER" id="PTHR11995">
    <property type="entry name" value="NADH DEHYDROGENASE"/>
    <property type="match status" value="1"/>
</dbReference>
<dbReference type="PANTHER" id="PTHR11995:SF14">
    <property type="entry name" value="NADH DEHYDROGENASE [UBIQUINONE] IRON-SULFUR PROTEIN 7, MITOCHONDRIAL"/>
    <property type="match status" value="1"/>
</dbReference>
<dbReference type="Pfam" id="PF01058">
    <property type="entry name" value="Oxidored_q6"/>
    <property type="match status" value="1"/>
</dbReference>
<dbReference type="SUPFAM" id="SSF56770">
    <property type="entry name" value="HydA/Nqo6-like"/>
    <property type="match status" value="1"/>
</dbReference>
<dbReference type="PROSITE" id="PS01150">
    <property type="entry name" value="COMPLEX1_20K"/>
    <property type="match status" value="1"/>
</dbReference>
<keyword id="KW-0004">4Fe-4S</keyword>
<keyword id="KW-0997">Cell inner membrane</keyword>
<keyword id="KW-1003">Cell membrane</keyword>
<keyword id="KW-0408">Iron</keyword>
<keyword id="KW-0411">Iron-sulfur</keyword>
<keyword id="KW-0472">Membrane</keyword>
<keyword id="KW-0479">Metal-binding</keyword>
<keyword id="KW-0520">NAD</keyword>
<keyword id="KW-0874">Quinone</keyword>
<keyword id="KW-1278">Translocase</keyword>
<keyword id="KW-0813">Transport</keyword>
<keyword id="KW-0830">Ubiquinone</keyword>
<organism>
    <name type="scientific">Brucella suis (strain ATCC 23445 / NCTC 10510)</name>
    <dbReference type="NCBI Taxonomy" id="470137"/>
    <lineage>
        <taxon>Bacteria</taxon>
        <taxon>Pseudomonadati</taxon>
        <taxon>Pseudomonadota</taxon>
        <taxon>Alphaproteobacteria</taxon>
        <taxon>Hyphomicrobiales</taxon>
        <taxon>Brucellaceae</taxon>
        <taxon>Brucella/Ochrobactrum group</taxon>
        <taxon>Brucella</taxon>
    </lineage>
</organism>
<proteinExistence type="inferred from homology"/>
<name>NUOB_BRUSI</name>
<evidence type="ECO:0000250" key="1"/>
<evidence type="ECO:0000255" key="2">
    <source>
        <dbReference type="HAMAP-Rule" id="MF_01356"/>
    </source>
</evidence>
<evidence type="ECO:0000256" key="3">
    <source>
        <dbReference type="SAM" id="MobiDB-lite"/>
    </source>
</evidence>
<accession>B0CLD0</accession>
<sequence>MGLTGTNTTLVAPQPKGILDPRTGKPVGSDDAFFNDLNGELSDKGFIVTSADALITWARTGSLMWMTFGLACCAVEMMHISMPRYDAERFGIAPRASPRQSDVMIVAGTLTNKMAPALRKVYDQMPEPRYVISMGSCANGGGYYHYSYSVVRGCDRVVPVDIYVPGCPPTAEALLYGILLLQKKIRRTGTIER</sequence>
<protein>
    <recommendedName>
        <fullName evidence="2">NADH-quinone oxidoreductase subunit B</fullName>
        <ecNumber evidence="2">7.1.1.-</ecNumber>
    </recommendedName>
    <alternativeName>
        <fullName evidence="2">NADH dehydrogenase I subunit B</fullName>
    </alternativeName>
    <alternativeName>
        <fullName evidence="2">NDH-1 subunit B</fullName>
    </alternativeName>
</protein>
<comment type="function">
    <text evidence="1">NDH-1 shuttles electrons from NADH, via FMN and iron-sulfur (Fe-S) centers, to quinones in the respiratory chain. Couples the redox reaction to proton translocation (for every two electrons transferred, four hydrogen ions are translocated across the cytoplasmic membrane), and thus conserves the redox energy in a proton gradient (By similarity).</text>
</comment>
<comment type="catalytic activity">
    <reaction evidence="2">
        <text>a quinone + NADH + 5 H(+)(in) = a quinol + NAD(+) + 4 H(+)(out)</text>
        <dbReference type="Rhea" id="RHEA:57888"/>
        <dbReference type="ChEBI" id="CHEBI:15378"/>
        <dbReference type="ChEBI" id="CHEBI:24646"/>
        <dbReference type="ChEBI" id="CHEBI:57540"/>
        <dbReference type="ChEBI" id="CHEBI:57945"/>
        <dbReference type="ChEBI" id="CHEBI:132124"/>
    </reaction>
</comment>
<comment type="cofactor">
    <cofactor evidence="2">
        <name>[4Fe-4S] cluster</name>
        <dbReference type="ChEBI" id="CHEBI:49883"/>
    </cofactor>
    <text evidence="2">Binds 1 [4Fe-4S] cluster.</text>
</comment>
<comment type="subunit">
    <text evidence="2">NDH-1 is composed of 14 different subunits. Subunits NuoB, C, D, E, F, and G constitute the peripheral sector of the complex.</text>
</comment>
<comment type="subcellular location">
    <subcellularLocation>
        <location evidence="2">Cell inner membrane</location>
        <topology evidence="2">Peripheral membrane protein</topology>
        <orientation evidence="2">Cytoplasmic side</orientation>
    </subcellularLocation>
</comment>
<comment type="similarity">
    <text evidence="2">Belongs to the complex I 20 kDa subunit family.</text>
</comment>